<evidence type="ECO:0000250" key="1"/>
<evidence type="ECO:0000250" key="2">
    <source>
        <dbReference type="UniProtKB" id="Q04477"/>
    </source>
</evidence>
<evidence type="ECO:0000255" key="3"/>
<evidence type="ECO:0000305" key="4"/>
<name>SPC24_YARLI</name>
<accession>Q6C7C3</accession>
<keyword id="KW-0131">Cell cycle</keyword>
<keyword id="KW-0132">Cell division</keyword>
<keyword id="KW-0137">Centromere</keyword>
<keyword id="KW-0158">Chromosome</keyword>
<keyword id="KW-0175">Coiled coil</keyword>
<keyword id="KW-0995">Kinetochore</keyword>
<keyword id="KW-0498">Mitosis</keyword>
<keyword id="KW-0539">Nucleus</keyword>
<keyword id="KW-1185">Reference proteome</keyword>
<protein>
    <recommendedName>
        <fullName>Probable kinetochore protein SPC24</fullName>
    </recommendedName>
</protein>
<reference key="1">
    <citation type="journal article" date="2004" name="Nature">
        <title>Genome evolution in yeasts.</title>
        <authorList>
            <person name="Dujon B."/>
            <person name="Sherman D."/>
            <person name="Fischer G."/>
            <person name="Durrens P."/>
            <person name="Casaregola S."/>
            <person name="Lafontaine I."/>
            <person name="de Montigny J."/>
            <person name="Marck C."/>
            <person name="Neuveglise C."/>
            <person name="Talla E."/>
            <person name="Goffard N."/>
            <person name="Frangeul L."/>
            <person name="Aigle M."/>
            <person name="Anthouard V."/>
            <person name="Babour A."/>
            <person name="Barbe V."/>
            <person name="Barnay S."/>
            <person name="Blanchin S."/>
            <person name="Beckerich J.-M."/>
            <person name="Beyne E."/>
            <person name="Bleykasten C."/>
            <person name="Boisrame A."/>
            <person name="Boyer J."/>
            <person name="Cattolico L."/>
            <person name="Confanioleri F."/>
            <person name="de Daruvar A."/>
            <person name="Despons L."/>
            <person name="Fabre E."/>
            <person name="Fairhead C."/>
            <person name="Ferry-Dumazet H."/>
            <person name="Groppi A."/>
            <person name="Hantraye F."/>
            <person name="Hennequin C."/>
            <person name="Jauniaux N."/>
            <person name="Joyet P."/>
            <person name="Kachouri R."/>
            <person name="Kerrest A."/>
            <person name="Koszul R."/>
            <person name="Lemaire M."/>
            <person name="Lesur I."/>
            <person name="Ma L."/>
            <person name="Muller H."/>
            <person name="Nicaud J.-M."/>
            <person name="Nikolski M."/>
            <person name="Oztas S."/>
            <person name="Ozier-Kalogeropoulos O."/>
            <person name="Pellenz S."/>
            <person name="Potier S."/>
            <person name="Richard G.-F."/>
            <person name="Straub M.-L."/>
            <person name="Suleau A."/>
            <person name="Swennen D."/>
            <person name="Tekaia F."/>
            <person name="Wesolowski-Louvel M."/>
            <person name="Westhof E."/>
            <person name="Wirth B."/>
            <person name="Zeniou-Meyer M."/>
            <person name="Zivanovic Y."/>
            <person name="Bolotin-Fukuhara M."/>
            <person name="Thierry A."/>
            <person name="Bouchier C."/>
            <person name="Caudron B."/>
            <person name="Scarpelli C."/>
            <person name="Gaillardin C."/>
            <person name="Weissenbach J."/>
            <person name="Wincker P."/>
            <person name="Souciet J.-L."/>
        </authorList>
    </citation>
    <scope>NUCLEOTIDE SEQUENCE [LARGE SCALE GENOMIC DNA]</scope>
    <source>
        <strain>CLIB 122 / E 150</strain>
    </source>
</reference>
<sequence>MDPIDLLRDVAKSFSTNEEIASTERVSVDITRLSLFREAKLAEARDKLQDQIRQRDLCQESVAGDSTTSERTQHVHELEREKMRLARAINDLEETLNATQAATSKLNAELELVEKESQQPIESAVENDSSAALQLKLFRTLGVTFDAEKPEKYTKCMIRSNTTSNVATLDLNVKEYSGFFITNYIWDKL</sequence>
<proteinExistence type="inferred from homology"/>
<organism>
    <name type="scientific">Yarrowia lipolytica (strain CLIB 122 / E 150)</name>
    <name type="common">Yeast</name>
    <name type="synonym">Candida lipolytica</name>
    <dbReference type="NCBI Taxonomy" id="284591"/>
    <lineage>
        <taxon>Eukaryota</taxon>
        <taxon>Fungi</taxon>
        <taxon>Dikarya</taxon>
        <taxon>Ascomycota</taxon>
        <taxon>Saccharomycotina</taxon>
        <taxon>Dipodascomycetes</taxon>
        <taxon>Dipodascales</taxon>
        <taxon>Dipodascales incertae sedis</taxon>
        <taxon>Yarrowia</taxon>
    </lineage>
</organism>
<feature type="chain" id="PRO_0000246668" description="Probable kinetochore protein SPC24">
    <location>
        <begin position="1"/>
        <end position="189"/>
    </location>
</feature>
<feature type="coiled-coil region" evidence="3">
    <location>
        <begin position="36"/>
        <end position="119"/>
    </location>
</feature>
<comment type="function">
    <text evidence="1">Acts as a component of the essential kinetochore-associated NDC80 complex, which is required for chromosome segregation and spindle checkpoint activity.</text>
</comment>
<comment type="subunit">
    <text evidence="1">Component of the NDC80 complex, which consists of NDC80, NUF2, SPC24 and SPC25.</text>
</comment>
<comment type="subcellular location">
    <subcellularLocation>
        <location evidence="2">Nucleus</location>
    </subcellularLocation>
    <subcellularLocation>
        <location evidence="2">Chromosome</location>
        <location evidence="2">Centromere</location>
        <location evidence="2">Kinetochore</location>
    </subcellularLocation>
    <text evidence="2">Associated with kinetochores.</text>
</comment>
<comment type="similarity">
    <text evidence="4">Belongs to the SPC24 family.</text>
</comment>
<dbReference type="EMBL" id="CR382131">
    <property type="protein sequence ID" value="CAG79018.1"/>
    <property type="molecule type" value="Genomic_DNA"/>
</dbReference>
<dbReference type="RefSeq" id="XP_503439.1">
    <property type="nucleotide sequence ID" value="XM_503439.1"/>
</dbReference>
<dbReference type="SMR" id="Q6C7C3"/>
<dbReference type="FunCoup" id="Q6C7C3">
    <property type="interactions" value="100"/>
</dbReference>
<dbReference type="STRING" id="284591.Q6C7C3"/>
<dbReference type="EnsemblFungi" id="CAG79018">
    <property type="protein sequence ID" value="CAG79018"/>
    <property type="gene ID" value="YALI0_E01980g"/>
</dbReference>
<dbReference type="KEGG" id="yli:2912075"/>
<dbReference type="VEuPathDB" id="FungiDB:YALI0_E01980g"/>
<dbReference type="HOGENOM" id="CLU_091441_0_0_1"/>
<dbReference type="InParanoid" id="Q6C7C3"/>
<dbReference type="OMA" id="NMSVEDE"/>
<dbReference type="OrthoDB" id="96302at4891"/>
<dbReference type="Proteomes" id="UP000001300">
    <property type="component" value="Chromosome E"/>
</dbReference>
<dbReference type="GO" id="GO:0031262">
    <property type="term" value="C:Ndc80 complex"/>
    <property type="evidence" value="ECO:0000250"/>
    <property type="project" value="UniProtKB"/>
</dbReference>
<dbReference type="GO" id="GO:0005634">
    <property type="term" value="C:nucleus"/>
    <property type="evidence" value="ECO:0007669"/>
    <property type="project" value="UniProtKB-SubCell"/>
</dbReference>
<dbReference type="GO" id="GO:0051301">
    <property type="term" value="P:cell division"/>
    <property type="evidence" value="ECO:0007669"/>
    <property type="project" value="UniProtKB-KW"/>
</dbReference>
<dbReference type="GO" id="GO:0007059">
    <property type="term" value="P:chromosome segregation"/>
    <property type="evidence" value="ECO:0000318"/>
    <property type="project" value="GO_Central"/>
</dbReference>
<dbReference type="GO" id="GO:0031134">
    <property type="term" value="P:sister chromatid biorientation"/>
    <property type="evidence" value="ECO:0000250"/>
    <property type="project" value="UniProtKB"/>
</dbReference>
<dbReference type="CDD" id="cd11565">
    <property type="entry name" value="RWD_Spc24"/>
    <property type="match status" value="1"/>
</dbReference>
<dbReference type="Gene3D" id="3.30.160.430">
    <property type="match status" value="1"/>
</dbReference>
<dbReference type="InterPro" id="IPR013252">
    <property type="entry name" value="Ndc80_Spc24"/>
</dbReference>
<dbReference type="InterPro" id="IPR038066">
    <property type="entry name" value="Spc24_Fungi_globular_sf"/>
</dbReference>
<dbReference type="PANTHER" id="PTHR22142">
    <property type="match status" value="1"/>
</dbReference>
<dbReference type="PANTHER" id="PTHR22142:SF2">
    <property type="entry name" value="KINETOCHORE PROTEIN SPC24"/>
    <property type="match status" value="1"/>
</dbReference>
<dbReference type="Pfam" id="PF08286">
    <property type="entry name" value="Spc24"/>
    <property type="match status" value="1"/>
</dbReference>
<dbReference type="SUPFAM" id="SSF143026">
    <property type="entry name" value="Kinetochore globular domain"/>
    <property type="match status" value="1"/>
</dbReference>
<gene>
    <name type="primary">SPC24</name>
    <name type="ordered locus">YALI0E01980g</name>
</gene>